<feature type="chain" id="PRO_1000069754" description="7-cyano-7-deazaguanine synthase">
    <location>
        <begin position="1"/>
        <end position="244"/>
    </location>
</feature>
<feature type="binding site" evidence="1">
    <location>
        <begin position="14"/>
        <end position="24"/>
    </location>
    <ligand>
        <name>ATP</name>
        <dbReference type="ChEBI" id="CHEBI:30616"/>
    </ligand>
</feature>
<feature type="binding site" evidence="1">
    <location>
        <position position="202"/>
    </location>
    <ligand>
        <name>Zn(2+)</name>
        <dbReference type="ChEBI" id="CHEBI:29105"/>
    </ligand>
</feature>
<feature type="binding site" evidence="1">
    <location>
        <position position="217"/>
    </location>
    <ligand>
        <name>Zn(2+)</name>
        <dbReference type="ChEBI" id="CHEBI:29105"/>
    </ligand>
</feature>
<feature type="binding site" evidence="1">
    <location>
        <position position="220"/>
    </location>
    <ligand>
        <name>Zn(2+)</name>
        <dbReference type="ChEBI" id="CHEBI:29105"/>
    </ligand>
</feature>
<feature type="binding site" evidence="1">
    <location>
        <position position="223"/>
    </location>
    <ligand>
        <name>Zn(2+)</name>
        <dbReference type="ChEBI" id="CHEBI:29105"/>
    </ligand>
</feature>
<name>QUEC_BURM7</name>
<comment type="function">
    <text evidence="1">Catalyzes the ATP-dependent conversion of 7-carboxy-7-deazaguanine (CDG) to 7-cyano-7-deazaguanine (preQ(0)).</text>
</comment>
<comment type="catalytic activity">
    <reaction evidence="1">
        <text>7-carboxy-7-deazaguanine + NH4(+) + ATP = 7-cyano-7-deazaguanine + ADP + phosphate + H2O + H(+)</text>
        <dbReference type="Rhea" id="RHEA:27982"/>
        <dbReference type="ChEBI" id="CHEBI:15377"/>
        <dbReference type="ChEBI" id="CHEBI:15378"/>
        <dbReference type="ChEBI" id="CHEBI:28938"/>
        <dbReference type="ChEBI" id="CHEBI:30616"/>
        <dbReference type="ChEBI" id="CHEBI:43474"/>
        <dbReference type="ChEBI" id="CHEBI:45075"/>
        <dbReference type="ChEBI" id="CHEBI:61036"/>
        <dbReference type="ChEBI" id="CHEBI:456216"/>
        <dbReference type="EC" id="6.3.4.20"/>
    </reaction>
</comment>
<comment type="cofactor">
    <cofactor evidence="1">
        <name>Zn(2+)</name>
        <dbReference type="ChEBI" id="CHEBI:29105"/>
    </cofactor>
    <text evidence="1">Binds 1 zinc ion per subunit.</text>
</comment>
<comment type="pathway">
    <text evidence="1">Purine metabolism; 7-cyano-7-deazaguanine biosynthesis.</text>
</comment>
<comment type="similarity">
    <text evidence="1">Belongs to the QueC family.</text>
</comment>
<dbReference type="EC" id="6.3.4.20" evidence="1"/>
<dbReference type="EMBL" id="CP000548">
    <property type="protein sequence ID" value="ABO05828.1"/>
    <property type="molecule type" value="Genomic_DNA"/>
</dbReference>
<dbReference type="RefSeq" id="WP_004190026.1">
    <property type="nucleotide sequence ID" value="NZ_CP007802.1"/>
</dbReference>
<dbReference type="SMR" id="A3MNQ3"/>
<dbReference type="GeneID" id="93058685"/>
<dbReference type="KEGG" id="bmaz:BM44_923"/>
<dbReference type="KEGG" id="bmn:BMA10247_2363"/>
<dbReference type="PATRIC" id="fig|320389.8.peg.1027"/>
<dbReference type="UniPathway" id="UPA00391"/>
<dbReference type="GO" id="GO:0005524">
    <property type="term" value="F:ATP binding"/>
    <property type="evidence" value="ECO:0007669"/>
    <property type="project" value="UniProtKB-UniRule"/>
</dbReference>
<dbReference type="GO" id="GO:0016879">
    <property type="term" value="F:ligase activity, forming carbon-nitrogen bonds"/>
    <property type="evidence" value="ECO:0007669"/>
    <property type="project" value="UniProtKB-UniRule"/>
</dbReference>
<dbReference type="GO" id="GO:0008270">
    <property type="term" value="F:zinc ion binding"/>
    <property type="evidence" value="ECO:0007669"/>
    <property type="project" value="UniProtKB-UniRule"/>
</dbReference>
<dbReference type="GO" id="GO:0008616">
    <property type="term" value="P:queuosine biosynthetic process"/>
    <property type="evidence" value="ECO:0007669"/>
    <property type="project" value="UniProtKB-UniRule"/>
</dbReference>
<dbReference type="CDD" id="cd01995">
    <property type="entry name" value="QueC-like"/>
    <property type="match status" value="1"/>
</dbReference>
<dbReference type="Gene3D" id="3.40.50.620">
    <property type="entry name" value="HUPs"/>
    <property type="match status" value="1"/>
</dbReference>
<dbReference type="HAMAP" id="MF_01633">
    <property type="entry name" value="QueC"/>
    <property type="match status" value="1"/>
</dbReference>
<dbReference type="InterPro" id="IPR018317">
    <property type="entry name" value="QueC"/>
</dbReference>
<dbReference type="InterPro" id="IPR014729">
    <property type="entry name" value="Rossmann-like_a/b/a_fold"/>
</dbReference>
<dbReference type="NCBIfam" id="TIGR00364">
    <property type="entry name" value="7-cyano-7-deazaguanine synthase QueC"/>
    <property type="match status" value="1"/>
</dbReference>
<dbReference type="PANTHER" id="PTHR42914">
    <property type="entry name" value="7-CYANO-7-DEAZAGUANINE SYNTHASE"/>
    <property type="match status" value="1"/>
</dbReference>
<dbReference type="PANTHER" id="PTHR42914:SF1">
    <property type="entry name" value="7-CYANO-7-DEAZAGUANINE SYNTHASE"/>
    <property type="match status" value="1"/>
</dbReference>
<dbReference type="Pfam" id="PF06508">
    <property type="entry name" value="QueC"/>
    <property type="match status" value="1"/>
</dbReference>
<dbReference type="PIRSF" id="PIRSF006293">
    <property type="entry name" value="ExsB"/>
    <property type="match status" value="1"/>
</dbReference>
<dbReference type="SUPFAM" id="SSF52402">
    <property type="entry name" value="Adenine nucleotide alpha hydrolases-like"/>
    <property type="match status" value="1"/>
</dbReference>
<protein>
    <recommendedName>
        <fullName evidence="1">7-cyano-7-deazaguanine synthase</fullName>
        <ecNumber evidence="1">6.3.4.20</ecNumber>
    </recommendedName>
    <alternativeName>
        <fullName evidence="1">7-cyano-7-carbaguanine synthase</fullName>
    </alternativeName>
    <alternativeName>
        <fullName evidence="1">PreQ(0) synthase</fullName>
    </alternativeName>
    <alternativeName>
        <fullName evidence="1">Queuosine biosynthesis protein QueC</fullName>
    </alternativeName>
</protein>
<organism>
    <name type="scientific">Burkholderia mallei (strain NCTC 10247)</name>
    <dbReference type="NCBI Taxonomy" id="320389"/>
    <lineage>
        <taxon>Bacteria</taxon>
        <taxon>Pseudomonadati</taxon>
        <taxon>Pseudomonadota</taxon>
        <taxon>Betaproteobacteria</taxon>
        <taxon>Burkholderiales</taxon>
        <taxon>Burkholderiaceae</taxon>
        <taxon>Burkholderia</taxon>
        <taxon>pseudomallei group</taxon>
    </lineage>
</organism>
<proteinExistence type="inferred from homology"/>
<keyword id="KW-0067">ATP-binding</keyword>
<keyword id="KW-0436">Ligase</keyword>
<keyword id="KW-0479">Metal-binding</keyword>
<keyword id="KW-0547">Nucleotide-binding</keyword>
<keyword id="KW-0671">Queuosine biosynthesis</keyword>
<keyword id="KW-0862">Zinc</keyword>
<accession>A3MNQ3</accession>
<sequence length="244" mass="27142">MIRTDAKDGALVLFSGGQDSATCVAWALERYQTVETLGFDYGQRHRVELECREGVRDALKRRFPQWSHKLGDDHLIDLSVLGSISDTAMTRAIEIETASNGLPNTFVPGRNLLFMTIAAAIAYRRGLRALVGGMCETDFSGYPDCRDDTMKALQVALNLGMDTRFVLETPLMWLDKADTWRLAEQLGGAPLVELIRVETHTCYVGERSELHDWGFGCGECPACKLRKRGYDAYLRGESVTEAPA</sequence>
<reference key="1">
    <citation type="journal article" date="2010" name="Genome Biol. Evol.">
        <title>Continuing evolution of Burkholderia mallei through genome reduction and large-scale rearrangements.</title>
        <authorList>
            <person name="Losada L."/>
            <person name="Ronning C.M."/>
            <person name="DeShazer D."/>
            <person name="Woods D."/>
            <person name="Fedorova N."/>
            <person name="Kim H.S."/>
            <person name="Shabalina S.A."/>
            <person name="Pearson T.R."/>
            <person name="Brinkac L."/>
            <person name="Tan P."/>
            <person name="Nandi T."/>
            <person name="Crabtree J."/>
            <person name="Badger J."/>
            <person name="Beckstrom-Sternberg S."/>
            <person name="Saqib M."/>
            <person name="Schutzer S.E."/>
            <person name="Keim P."/>
            <person name="Nierman W.C."/>
        </authorList>
    </citation>
    <scope>NUCLEOTIDE SEQUENCE [LARGE SCALE GENOMIC DNA]</scope>
    <source>
        <strain>NCTC 10247</strain>
    </source>
</reference>
<evidence type="ECO:0000255" key="1">
    <source>
        <dbReference type="HAMAP-Rule" id="MF_01633"/>
    </source>
</evidence>
<gene>
    <name evidence="1" type="primary">queC</name>
    <name type="ordered locus">BMA10247_2363</name>
</gene>